<protein>
    <recommendedName>
        <fullName>NADH-cytochrome b5 reductase 2</fullName>
        <ecNumber>1.6.2.2</ecNumber>
    </recommendedName>
    <alternativeName>
        <fullName>Mitochondrial cytochrome b reductase</fullName>
    </alternativeName>
    <alternativeName>
        <fullName>p34/p32</fullName>
    </alternativeName>
    <component>
        <recommendedName>
            <fullName>NADH-cytochrome b5 reductase p34 form</fullName>
        </recommendedName>
    </component>
    <component>
        <recommendedName>
            <fullName>NADH-cytochrome b5 reductase p32 form</fullName>
        </recommendedName>
    </component>
</protein>
<reference key="1">
    <citation type="journal article" date="2007" name="Proc. Natl. Acad. Sci. U.S.A.">
        <title>Genome sequencing and comparative analysis of Saccharomyces cerevisiae strain YJM789.</title>
        <authorList>
            <person name="Wei W."/>
            <person name="McCusker J.H."/>
            <person name="Hyman R.W."/>
            <person name="Jones T."/>
            <person name="Ning Y."/>
            <person name="Cao Z."/>
            <person name="Gu Z."/>
            <person name="Bruno D."/>
            <person name="Miranda M."/>
            <person name="Nguyen M."/>
            <person name="Wilhelmy J."/>
            <person name="Komp C."/>
            <person name="Tamse R."/>
            <person name="Wang X."/>
            <person name="Jia P."/>
            <person name="Luedi P."/>
            <person name="Oefner P.J."/>
            <person name="David L."/>
            <person name="Dietrich F.S."/>
            <person name="Li Y."/>
            <person name="Davis R.W."/>
            <person name="Steinmetz L.M."/>
        </authorList>
    </citation>
    <scope>NUCLEOTIDE SEQUENCE [LARGE SCALE GENOMIC DNA]</scope>
    <source>
        <strain>YJM789</strain>
    </source>
</reference>
<name>MCR1_YEAS7</name>
<dbReference type="EC" id="1.6.2.2"/>
<dbReference type="EMBL" id="AAFW02000151">
    <property type="protein sequence ID" value="EDN60020.1"/>
    <property type="molecule type" value="Genomic_DNA"/>
</dbReference>
<dbReference type="SMR" id="A6ZZH2"/>
<dbReference type="TopDownProteomics" id="A6ZZH2"/>
<dbReference type="HOGENOM" id="CLU_003827_9_1_1"/>
<dbReference type="Proteomes" id="UP000007060">
    <property type="component" value="Unassembled WGS sequence"/>
</dbReference>
<dbReference type="GO" id="GO:0005758">
    <property type="term" value="C:mitochondrial intermembrane space"/>
    <property type="evidence" value="ECO:0007669"/>
    <property type="project" value="UniProtKB-SubCell"/>
</dbReference>
<dbReference type="GO" id="GO:0005741">
    <property type="term" value="C:mitochondrial outer membrane"/>
    <property type="evidence" value="ECO:0007669"/>
    <property type="project" value="UniProtKB-SubCell"/>
</dbReference>
<dbReference type="GO" id="GO:0004128">
    <property type="term" value="F:cytochrome-b5 reductase activity, acting on NAD(P)H"/>
    <property type="evidence" value="ECO:0007669"/>
    <property type="project" value="UniProtKB-EC"/>
</dbReference>
<dbReference type="GO" id="GO:0006696">
    <property type="term" value="P:ergosterol biosynthetic process"/>
    <property type="evidence" value="ECO:0007669"/>
    <property type="project" value="TreeGrafter"/>
</dbReference>
<dbReference type="CDD" id="cd06183">
    <property type="entry name" value="cyt_b5_reduct_like"/>
    <property type="match status" value="1"/>
</dbReference>
<dbReference type="FunFam" id="2.40.30.10:FF:000032">
    <property type="entry name" value="NADH-cytochrome b5 reductase"/>
    <property type="match status" value="1"/>
</dbReference>
<dbReference type="FunFam" id="3.40.50.80:FF:000009">
    <property type="entry name" value="NADH-cytochrome b5 reductase"/>
    <property type="match status" value="1"/>
</dbReference>
<dbReference type="Gene3D" id="3.40.50.80">
    <property type="entry name" value="Nucleotide-binding domain of ferredoxin-NADP reductase (FNR) module"/>
    <property type="match status" value="1"/>
</dbReference>
<dbReference type="Gene3D" id="2.40.30.10">
    <property type="entry name" value="Translation factors"/>
    <property type="match status" value="1"/>
</dbReference>
<dbReference type="InterPro" id="IPR001834">
    <property type="entry name" value="CBR-like"/>
</dbReference>
<dbReference type="InterPro" id="IPR008333">
    <property type="entry name" value="Cbr1-like_FAD-bd_dom"/>
</dbReference>
<dbReference type="InterPro" id="IPR017927">
    <property type="entry name" value="FAD-bd_FR_type"/>
</dbReference>
<dbReference type="InterPro" id="IPR001709">
    <property type="entry name" value="Flavoprot_Pyr_Nucl_cyt_Rdtase"/>
</dbReference>
<dbReference type="InterPro" id="IPR039261">
    <property type="entry name" value="FNR_nucleotide-bd"/>
</dbReference>
<dbReference type="InterPro" id="IPR001433">
    <property type="entry name" value="OxRdtase_FAD/NAD-bd"/>
</dbReference>
<dbReference type="InterPro" id="IPR017938">
    <property type="entry name" value="Riboflavin_synthase-like_b-brl"/>
</dbReference>
<dbReference type="PANTHER" id="PTHR19370">
    <property type="entry name" value="NADH-CYTOCHROME B5 REDUCTASE"/>
    <property type="match status" value="1"/>
</dbReference>
<dbReference type="PANTHER" id="PTHR19370:SF171">
    <property type="entry name" value="NADH-CYTOCHROME B5 REDUCTASE 2"/>
    <property type="match status" value="1"/>
</dbReference>
<dbReference type="Pfam" id="PF00970">
    <property type="entry name" value="FAD_binding_6"/>
    <property type="match status" value="1"/>
</dbReference>
<dbReference type="Pfam" id="PF00175">
    <property type="entry name" value="NAD_binding_1"/>
    <property type="match status" value="1"/>
</dbReference>
<dbReference type="PRINTS" id="PR00406">
    <property type="entry name" value="CYTB5RDTASE"/>
</dbReference>
<dbReference type="PRINTS" id="PR00371">
    <property type="entry name" value="FPNCR"/>
</dbReference>
<dbReference type="SUPFAM" id="SSF52343">
    <property type="entry name" value="Ferredoxin reductase-like, C-terminal NADP-linked domain"/>
    <property type="match status" value="1"/>
</dbReference>
<dbReference type="SUPFAM" id="SSF63380">
    <property type="entry name" value="Riboflavin synthase domain-like"/>
    <property type="match status" value="1"/>
</dbReference>
<dbReference type="PROSITE" id="PS51384">
    <property type="entry name" value="FAD_FR"/>
    <property type="match status" value="1"/>
</dbReference>
<feature type="chain" id="PRO_0000330195" description="NADH-cytochrome b5 reductase p34 form">
    <location>
        <begin position="1"/>
        <end position="302"/>
    </location>
</feature>
<feature type="propeptide" id="PRO_0000330196" description="Removed in mature form" evidence="1">
    <location>
        <begin position="1"/>
        <end position="41"/>
    </location>
</feature>
<feature type="chain" id="PRO_0000330197" description="NADH-cytochrome b5 reductase p32 form">
    <location>
        <begin position="42"/>
        <end position="302"/>
    </location>
</feature>
<feature type="transmembrane region" description="Helical" evidence="3">
    <location>
        <begin position="12"/>
        <end position="32"/>
    </location>
</feature>
<feature type="domain" description="FAD-binding FR-type" evidence="4">
    <location>
        <begin position="51"/>
        <end position="155"/>
    </location>
</feature>
<feature type="binding site" evidence="1">
    <location>
        <begin position="158"/>
        <end position="193"/>
    </location>
    <ligand>
        <name>FAD</name>
        <dbReference type="ChEBI" id="CHEBI:57692"/>
    </ligand>
</feature>
<feature type="site" description="Cleavage; by IMP1" evidence="1">
    <location>
        <begin position="41"/>
        <end position="42"/>
    </location>
</feature>
<feature type="modified residue" description="Phosphoserine" evidence="2">
    <location>
        <position position="278"/>
    </location>
</feature>
<gene>
    <name type="primary">MCR1</name>
    <name type="ORF">SCY_3232</name>
</gene>
<sequence length="302" mass="34108">MFSRLSRSHSKALPIALGTVAIAAATAFYFANRNQHSFVFNESNKVFKGDDKWIDLPISKIEEESHDTRRFTFKLPTEDSEMGLVLASALFAKFVTPKGSNVVRPYTPVSDLSQKGHFQLVVKHYEGGKMTSHLFGLKPNDTVSFKGPIMKWKWQPNQFKSITLLGAGTGINPLYQLAHHIVENPNDKTKVNLLYGNKTPQDILLRKELDALKEKYPDKFNVTYFVDDKQDDQDFDGEIGFISKDFIQEHVPGPKESTHLFVCGPPPFMNAYSGEKKSPKDQGELIGILNNLGYSKDQVFKF</sequence>
<proteinExistence type="inferred from homology"/>
<evidence type="ECO:0000250" key="1"/>
<evidence type="ECO:0000250" key="2">
    <source>
        <dbReference type="UniProtKB" id="P36060"/>
    </source>
</evidence>
<evidence type="ECO:0000255" key="3"/>
<evidence type="ECO:0000255" key="4">
    <source>
        <dbReference type="PROSITE-ProRule" id="PRU00716"/>
    </source>
</evidence>
<evidence type="ECO:0000305" key="5"/>
<accession>A6ZZH2</accession>
<keyword id="KW-0274">FAD</keyword>
<keyword id="KW-0285">Flavoprotein</keyword>
<keyword id="KW-0472">Membrane</keyword>
<keyword id="KW-0496">Mitochondrion</keyword>
<keyword id="KW-1000">Mitochondrion outer membrane</keyword>
<keyword id="KW-0520">NAD</keyword>
<keyword id="KW-0560">Oxidoreductase</keyword>
<keyword id="KW-0597">Phosphoprotein</keyword>
<keyword id="KW-0812">Transmembrane</keyword>
<keyword id="KW-1133">Transmembrane helix</keyword>
<organism>
    <name type="scientific">Saccharomyces cerevisiae (strain YJM789)</name>
    <name type="common">Baker's yeast</name>
    <dbReference type="NCBI Taxonomy" id="307796"/>
    <lineage>
        <taxon>Eukaryota</taxon>
        <taxon>Fungi</taxon>
        <taxon>Dikarya</taxon>
        <taxon>Ascomycota</taxon>
        <taxon>Saccharomycotina</taxon>
        <taxon>Saccharomycetes</taxon>
        <taxon>Saccharomycetales</taxon>
        <taxon>Saccharomycetaceae</taxon>
        <taxon>Saccharomyces</taxon>
    </lineage>
</organism>
<comment type="function">
    <text evidence="1">The outer membrane form may mediate the reduction of outer membrane cytochrome b5, and the soluble inter-membrane space form may transfer electrons from external NADH to cytochrome c, thereby mediating an antimycin-insensitive, energy-coupled oxidation of external NADH by yeast mitochondria. Involved in the reduction of D-erythroascorbyl free radicals (By similarity).</text>
</comment>
<comment type="catalytic activity">
    <reaction>
        <text>2 Fe(III)-[cytochrome b5] + NADH = 2 Fe(II)-[cytochrome b5] + NAD(+) + H(+)</text>
        <dbReference type="Rhea" id="RHEA:46680"/>
        <dbReference type="Rhea" id="RHEA-COMP:10438"/>
        <dbReference type="Rhea" id="RHEA-COMP:10439"/>
        <dbReference type="ChEBI" id="CHEBI:15378"/>
        <dbReference type="ChEBI" id="CHEBI:29033"/>
        <dbReference type="ChEBI" id="CHEBI:29034"/>
        <dbReference type="ChEBI" id="CHEBI:57540"/>
        <dbReference type="ChEBI" id="CHEBI:57945"/>
        <dbReference type="EC" id="1.6.2.2"/>
    </reaction>
</comment>
<comment type="cofactor">
    <cofactor evidence="1">
        <name>FAD</name>
        <dbReference type="ChEBI" id="CHEBI:57692"/>
    </cofactor>
</comment>
<comment type="subcellular location">
    <molecule>NADH-cytochrome b5 reductase p32 form</molecule>
    <subcellularLocation>
        <location evidence="1">Mitochondrion intermembrane space</location>
    </subcellularLocation>
</comment>
<comment type="subcellular location">
    <molecule>NADH-cytochrome b5 reductase p34 form</molecule>
    <subcellularLocation>
        <location evidence="1">Mitochondrion outer membrane</location>
        <topology evidence="1">Single-pass membrane protein</topology>
    </subcellularLocation>
</comment>
<comment type="induction">
    <text evidence="1">By osmotic stress.</text>
</comment>
<comment type="PTM">
    <text evidence="1">There are two isoforms of NADH-cytochrome b5 reductase, a 34 kDa form (p34) and a 32 kDa form (p32). The p34 form becomes firmly anchored to the outer mitochondrial membrane after an incomplete translocation arrest. The p32 form is formed after translocation of the p34 precursor to the inner mitochondrial membrane, where it is processed by mitochondrial inner membrane peptidase (IMP) complex and released to the intermembrane space (By similarity).</text>
</comment>
<comment type="similarity">
    <text evidence="5">Belongs to the flavoprotein pyridine nucleotide cytochrome reductase family.</text>
</comment>